<sequence>MSYQPQTEAATSRFLNVEEAGKTLRIHFNDCGQGDETVVLLHGSGPGATGWANFSRNIDPLVEAGYRVILLDCPGWGKSDSIVNSGSRSDLNARILKSVVDQLDIAKIHLLGNSMGGHSSVAFTLNWPERVGKLVLMGGGTGGMSLFTPMPTEGIKRLNQLYRQPTIENLKLMMDIFVFDTSDLTDALFEARLNNMLSRRDHLENFVKSLEANPKQFPDFGPRLAEIKAQTLIVWGRNDRFVPMDAGLRLLSGIAGSELHIFRDCGHWAQWEHADAFNQLVLNFLARP</sequence>
<protein>
    <recommendedName>
        <fullName evidence="2">2-hydroxy-6-oxononadienedioate/2-hydroxy-6-oxononatrienedioate hydrolase</fullName>
        <ecNumber evidence="2">3.7.1.14</ecNumber>
    </recommendedName>
    <alternativeName>
        <fullName evidence="2">2-hydroxy-6-ketonona-2,4-diene-1,9-dioic acid 5,6-hydrolase</fullName>
    </alternativeName>
    <alternativeName>
        <fullName evidence="2">2-hydroxy-6-oxonona-2,4,7-triene-1,9-dioic acid 5,6-hydrolase</fullName>
    </alternativeName>
    <alternativeName>
        <fullName evidence="2">2-hydroxy-6-oxonona-2,4-diene-1,9-dioic acid 5,6-hydrolase</fullName>
    </alternativeName>
</protein>
<name>MHPC_ECOHS</name>
<keyword id="KW-0058">Aromatic hydrocarbons catabolism</keyword>
<keyword id="KW-0378">Hydrolase</keyword>
<reference key="1">
    <citation type="journal article" date="2008" name="J. Bacteriol.">
        <title>The pangenome structure of Escherichia coli: comparative genomic analysis of E. coli commensal and pathogenic isolates.</title>
        <authorList>
            <person name="Rasko D.A."/>
            <person name="Rosovitz M.J."/>
            <person name="Myers G.S.A."/>
            <person name="Mongodin E.F."/>
            <person name="Fricke W.F."/>
            <person name="Gajer P."/>
            <person name="Crabtree J."/>
            <person name="Sebaihia M."/>
            <person name="Thomson N.R."/>
            <person name="Chaudhuri R."/>
            <person name="Henderson I.R."/>
            <person name="Sperandio V."/>
            <person name="Ravel J."/>
        </authorList>
    </citation>
    <scope>NUCLEOTIDE SEQUENCE [LARGE SCALE GENOMIC DNA]</scope>
    <source>
        <strain>HS</strain>
    </source>
</reference>
<dbReference type="EC" id="3.7.1.14" evidence="2"/>
<dbReference type="EMBL" id="CP000802">
    <property type="protein sequence ID" value="ABV04800.1"/>
    <property type="status" value="ALT_INIT"/>
    <property type="molecule type" value="Genomic_DNA"/>
</dbReference>
<dbReference type="RefSeq" id="WP_000121898.1">
    <property type="nucleotide sequence ID" value="NC_009800.1"/>
</dbReference>
<dbReference type="SMR" id="A7ZWZ6"/>
<dbReference type="ESTHER" id="ecoli-mhpc">
    <property type="family name" value="Carbon-carbon_bond_hydrolase"/>
</dbReference>
<dbReference type="MEROPS" id="S33.995"/>
<dbReference type="GeneID" id="93777106"/>
<dbReference type="KEGG" id="ecx:EcHS_A0413"/>
<dbReference type="HOGENOM" id="CLU_020336_13_2_6"/>
<dbReference type="UniPathway" id="UPA00714"/>
<dbReference type="GO" id="GO:0005737">
    <property type="term" value="C:cytoplasm"/>
    <property type="evidence" value="ECO:0007669"/>
    <property type="project" value="InterPro"/>
</dbReference>
<dbReference type="GO" id="GO:0052823">
    <property type="term" value="F:2-hydroxy-6-oxonona-2,4,7-trienedioate hydrolase activity"/>
    <property type="evidence" value="ECO:0007669"/>
    <property type="project" value="RHEA"/>
</dbReference>
<dbReference type="GO" id="GO:0018771">
    <property type="term" value="F:2-hydroxy-6-oxonona-2,4-dienedioate hydrolase activity"/>
    <property type="evidence" value="ECO:0007669"/>
    <property type="project" value="UniProtKB-UniRule"/>
</dbReference>
<dbReference type="GO" id="GO:0042803">
    <property type="term" value="F:protein homodimerization activity"/>
    <property type="evidence" value="ECO:0007669"/>
    <property type="project" value="InterPro"/>
</dbReference>
<dbReference type="GO" id="GO:0019380">
    <property type="term" value="P:3-phenylpropionate catabolic process"/>
    <property type="evidence" value="ECO:0007669"/>
    <property type="project" value="UniProtKB-UniRule"/>
</dbReference>
<dbReference type="FunFam" id="3.40.50.1820:FF:000085">
    <property type="entry name" value="2-hydroxy-6-oxononadienedioate/2-hydroxy-6-oxononatrienedioate hydrolase"/>
    <property type="match status" value="1"/>
</dbReference>
<dbReference type="Gene3D" id="3.40.50.1820">
    <property type="entry name" value="alpha/beta hydrolase"/>
    <property type="match status" value="1"/>
</dbReference>
<dbReference type="HAMAP" id="MF_01654">
    <property type="entry name" value="MhpC"/>
    <property type="match status" value="1"/>
</dbReference>
<dbReference type="InterPro" id="IPR000073">
    <property type="entry name" value="AB_hydrolase_1"/>
</dbReference>
<dbReference type="InterPro" id="IPR029058">
    <property type="entry name" value="AB_hydrolase_fold"/>
</dbReference>
<dbReference type="InterPro" id="IPR000639">
    <property type="entry name" value="Epox_hydrolase-like"/>
</dbReference>
<dbReference type="InterPro" id="IPR023791">
    <property type="entry name" value="MhpC_alpha/beta_hydrolase"/>
</dbReference>
<dbReference type="PANTHER" id="PTHR43689:SF8">
    <property type="entry name" value="ALPHA_BETA-HYDROLASES SUPERFAMILY PROTEIN"/>
    <property type="match status" value="1"/>
</dbReference>
<dbReference type="PANTHER" id="PTHR43689">
    <property type="entry name" value="HYDROLASE"/>
    <property type="match status" value="1"/>
</dbReference>
<dbReference type="Pfam" id="PF00561">
    <property type="entry name" value="Abhydrolase_1"/>
    <property type="match status" value="1"/>
</dbReference>
<dbReference type="PRINTS" id="PR00111">
    <property type="entry name" value="ABHYDROLASE"/>
</dbReference>
<dbReference type="PRINTS" id="PR00412">
    <property type="entry name" value="EPOXHYDRLASE"/>
</dbReference>
<dbReference type="SUPFAM" id="SSF53474">
    <property type="entry name" value="alpha/beta-Hydrolases"/>
    <property type="match status" value="1"/>
</dbReference>
<gene>
    <name evidence="2" type="primary">mhpC</name>
    <name type="ordered locus">EcHS_A0413</name>
</gene>
<evidence type="ECO:0000255" key="1"/>
<evidence type="ECO:0000255" key="2">
    <source>
        <dbReference type="HAMAP-Rule" id="MF_01654"/>
    </source>
</evidence>
<evidence type="ECO:0000305" key="3"/>
<proteinExistence type="inferred from homology"/>
<comment type="function">
    <text evidence="2">Catalyzes the cleavage of the C5-C6 bond of 2-hydroxy-6-oxononadienedioate and 2-hydroxy-6-oxononatrienedioate, a dienol ring fission product of the bacterial meta-cleavage pathway for degradation of phenylpropionic acid.</text>
</comment>
<comment type="catalytic activity">
    <reaction evidence="2">
        <text>(2Z,4E)-2-hydroxy-6-oxonona-2,4-dienedioate + H2O = (2Z)-2-hydroxypenta-2,4-dienoate + succinate + H(+)</text>
        <dbReference type="Rhea" id="RHEA:34187"/>
        <dbReference type="ChEBI" id="CHEBI:15377"/>
        <dbReference type="ChEBI" id="CHEBI:15378"/>
        <dbReference type="ChEBI" id="CHEBI:30031"/>
        <dbReference type="ChEBI" id="CHEBI:66887"/>
        <dbReference type="ChEBI" id="CHEBI:67152"/>
        <dbReference type="EC" id="3.7.1.14"/>
    </reaction>
</comment>
<comment type="catalytic activity">
    <reaction evidence="2">
        <text>(2Z,4E,7E)-2-hydroxy-6-oxonona-2,4,7-trienedioate + H2O = (2Z)-2-hydroxypenta-2,4-dienoate + fumarate + H(+)</text>
        <dbReference type="Rhea" id="RHEA:34191"/>
        <dbReference type="ChEBI" id="CHEBI:15377"/>
        <dbReference type="ChEBI" id="CHEBI:15378"/>
        <dbReference type="ChEBI" id="CHEBI:29806"/>
        <dbReference type="ChEBI" id="CHEBI:66888"/>
        <dbReference type="ChEBI" id="CHEBI:67152"/>
        <dbReference type="EC" id="3.7.1.14"/>
    </reaction>
</comment>
<comment type="pathway">
    <text evidence="2">Aromatic compound metabolism; 3-phenylpropanoate degradation.</text>
</comment>
<comment type="subunit">
    <text evidence="2">Homodimer.</text>
</comment>
<comment type="similarity">
    <text evidence="2">Belongs to the AB hydrolase superfamily. MhpC family.</text>
</comment>
<comment type="sequence caution" evidence="3">
    <conflict type="erroneous initiation">
        <sequence resource="EMBL-CDS" id="ABV04800"/>
    </conflict>
    <text>Extended N-terminus.</text>
</comment>
<organism>
    <name type="scientific">Escherichia coli O9:H4 (strain HS)</name>
    <dbReference type="NCBI Taxonomy" id="331112"/>
    <lineage>
        <taxon>Bacteria</taxon>
        <taxon>Pseudomonadati</taxon>
        <taxon>Pseudomonadota</taxon>
        <taxon>Gammaproteobacteria</taxon>
        <taxon>Enterobacterales</taxon>
        <taxon>Enterobacteriaceae</taxon>
        <taxon>Escherichia</taxon>
    </lineage>
</organism>
<accession>A7ZWZ6</accession>
<feature type="chain" id="PRO_0000337782" description="2-hydroxy-6-oxononadienedioate/2-hydroxy-6-oxononatrienedioate hydrolase">
    <location>
        <begin position="1"/>
        <end position="288"/>
    </location>
</feature>
<feature type="domain" description="AB hydrolase-1" evidence="1">
    <location>
        <begin position="38"/>
        <end position="273"/>
    </location>
</feature>
<feature type="active site" description="Proton acceptor" evidence="2">
    <location>
        <position position="267"/>
    </location>
</feature>
<feature type="site" description="Transition state stabilizer" evidence="2">
    <location>
        <position position="114"/>
    </location>
</feature>
<feature type="site" description="Catalytic role in ketonization of the dienol substrate (substrate destabilization)" evidence="2">
    <location>
        <position position="192"/>
    </location>
</feature>